<evidence type="ECO:0000250" key="1">
    <source>
        <dbReference type="UniProtKB" id="Q7L4I2"/>
    </source>
</evidence>
<evidence type="ECO:0000255" key="2"/>
<evidence type="ECO:0000256" key="3">
    <source>
        <dbReference type="SAM" id="MobiDB-lite"/>
    </source>
</evidence>
<evidence type="ECO:0000305" key="4"/>
<accession>Q5PQR4</accession>
<reference key="1">
    <citation type="journal article" date="2004" name="Genome Res.">
        <title>The status, quality, and expansion of the NIH full-length cDNA project: the Mammalian Gene Collection (MGC).</title>
        <authorList>
            <consortium name="The MGC Project Team"/>
        </authorList>
    </citation>
    <scope>NUCLEOTIDE SEQUENCE [LARGE SCALE MRNA]</scope>
    <source>
        <tissue>Testis</tissue>
    </source>
</reference>
<protein>
    <recommendedName>
        <fullName>Arginine/serine-rich coiled-coil protein 2</fullName>
    </recommendedName>
</protein>
<feature type="chain" id="PRO_0000314940" description="Arginine/serine-rich coiled-coil protein 2">
    <location>
        <begin position="1"/>
        <end position="376"/>
    </location>
</feature>
<feature type="region of interest" description="Disordered" evidence="3">
    <location>
        <begin position="1"/>
        <end position="171"/>
    </location>
</feature>
<feature type="coiled-coil region" evidence="2">
    <location>
        <begin position="171"/>
        <end position="214"/>
    </location>
</feature>
<feature type="compositionally biased region" description="Basic and acidic residues" evidence="3">
    <location>
        <begin position="13"/>
        <end position="52"/>
    </location>
</feature>
<feature type="compositionally biased region" description="Basic residues" evidence="3">
    <location>
        <begin position="53"/>
        <end position="155"/>
    </location>
</feature>
<feature type="modified residue" description="Phosphoserine" evidence="1">
    <location>
        <position position="45"/>
    </location>
</feature>
<feature type="modified residue" description="Phosphoserine" evidence="1">
    <location>
        <position position="318"/>
    </location>
</feature>
<feature type="cross-link" description="Glycyl lysine isopeptide (Lys-Gly) (interchain with G-Cter in SUMO1); alternate" evidence="1">
    <location>
        <position position="317"/>
    </location>
</feature>
<feature type="cross-link" description="Glycyl lysine isopeptide (Lys-Gly) (interchain with G-Cter in SUMO2); alternate" evidence="1">
    <location>
        <position position="317"/>
    </location>
</feature>
<name>RSRC2_RAT</name>
<dbReference type="EMBL" id="BC087067">
    <property type="protein sequence ID" value="AAH87067.1"/>
    <property type="molecule type" value="mRNA"/>
</dbReference>
<dbReference type="RefSeq" id="NP_001014150.1">
    <property type="nucleotide sequence ID" value="NM_001014128.2"/>
</dbReference>
<dbReference type="RefSeq" id="XP_006249402.1">
    <property type="nucleotide sequence ID" value="XM_006249340.2"/>
</dbReference>
<dbReference type="SMR" id="Q5PQR4"/>
<dbReference type="FunCoup" id="Q5PQR4">
    <property type="interactions" value="3454"/>
</dbReference>
<dbReference type="STRING" id="10116.ENSRNOP00000070981"/>
<dbReference type="iPTMnet" id="Q5PQR4"/>
<dbReference type="PhosphoSitePlus" id="Q5PQR4"/>
<dbReference type="PaxDb" id="10116-ENSRNOP00000054602"/>
<dbReference type="Ensembl" id="ENSRNOT00000057788.4">
    <property type="protein sequence ID" value="ENSRNOP00000054602.3"/>
    <property type="gene ID" value="ENSRNOG00000001238.8"/>
</dbReference>
<dbReference type="GeneID" id="360807"/>
<dbReference type="KEGG" id="rno:360807"/>
<dbReference type="UCSC" id="RGD:1564882">
    <property type="organism name" value="rat"/>
</dbReference>
<dbReference type="AGR" id="RGD:1564882"/>
<dbReference type="CTD" id="65117"/>
<dbReference type="RGD" id="1564882">
    <property type="gene designation" value="Rsrc2"/>
</dbReference>
<dbReference type="eggNOG" id="ENOG502QQ3C">
    <property type="taxonomic scope" value="Eukaryota"/>
</dbReference>
<dbReference type="GeneTree" id="ENSGT00730000111142"/>
<dbReference type="HOGENOM" id="CLU_051694_0_0_1"/>
<dbReference type="InParanoid" id="Q5PQR4"/>
<dbReference type="OMA" id="QEEMFKN"/>
<dbReference type="PhylomeDB" id="Q5PQR4"/>
<dbReference type="PRO" id="PR:Q5PQR4"/>
<dbReference type="Proteomes" id="UP000002494">
    <property type="component" value="Chromosome 12"/>
</dbReference>
<dbReference type="Bgee" id="ENSRNOG00000001238">
    <property type="expression patterns" value="Expressed in ovary and 20 other cell types or tissues"/>
</dbReference>
<dbReference type="ExpressionAtlas" id="Q5PQR4">
    <property type="expression patterns" value="baseline and differential"/>
</dbReference>
<dbReference type="InterPro" id="IPR028124">
    <property type="entry name" value="SMAP_dom"/>
</dbReference>
<dbReference type="PANTHER" id="PTHR22426">
    <property type="entry name" value="ARGININE_SERINE-RICH COILED-COIL PROTEIN 2"/>
    <property type="match status" value="1"/>
</dbReference>
<dbReference type="PANTHER" id="PTHR22426:SF2">
    <property type="entry name" value="ARGININE_SERINE-RICH COILED-COIL PROTEIN 2"/>
    <property type="match status" value="1"/>
</dbReference>
<dbReference type="Pfam" id="PF15477">
    <property type="entry name" value="SMAP"/>
    <property type="match status" value="1"/>
</dbReference>
<keyword id="KW-0175">Coiled coil</keyword>
<keyword id="KW-1017">Isopeptide bond</keyword>
<keyword id="KW-0597">Phosphoprotein</keyword>
<keyword id="KW-1185">Reference proteome</keyword>
<keyword id="KW-0832">Ubl conjugation</keyword>
<sequence length="376" mass="43891">MIRTNFLLKQARRHESKDKSSKRHKSEEHNDKEHSSDKGRERLNSSENGEDRHKRKERKSSRGRSHSRSRSRERRHRSRSRERKKSRSRSRDRKKSRSRSRDRKKSRSRSRDRKRRIRTRSRSRSRHRHRTRSRSRSRSRSRDRKKRIEKPRRFSRSLSRTPSPPPFRGRNTAMDAQEALARRLERAKKLQEQREKEMVEKQKQQEMAAAAAATGGSVLNVAALLASGTQVTPQIAMAAQMAALQAKALAETGIAVPSYYNPAAVNPMKFAEQEKKRKMLWQGKKEGDKSQSAEIWEKLNFGNKDQNVKFRKLMGIKSEDEAGCSSVDEESYKTLKQQEEVFRNLDAQYEMARSQTHTQRGMGLGFTSSMRGMDTV</sequence>
<comment type="similarity">
    <text evidence="4">Belongs to the RSRC2 family.</text>
</comment>
<proteinExistence type="evidence at transcript level"/>
<organism>
    <name type="scientific">Rattus norvegicus</name>
    <name type="common">Rat</name>
    <dbReference type="NCBI Taxonomy" id="10116"/>
    <lineage>
        <taxon>Eukaryota</taxon>
        <taxon>Metazoa</taxon>
        <taxon>Chordata</taxon>
        <taxon>Craniata</taxon>
        <taxon>Vertebrata</taxon>
        <taxon>Euteleostomi</taxon>
        <taxon>Mammalia</taxon>
        <taxon>Eutheria</taxon>
        <taxon>Euarchontoglires</taxon>
        <taxon>Glires</taxon>
        <taxon>Rodentia</taxon>
        <taxon>Myomorpha</taxon>
        <taxon>Muroidea</taxon>
        <taxon>Muridae</taxon>
        <taxon>Murinae</taxon>
        <taxon>Rattus</taxon>
    </lineage>
</organism>
<gene>
    <name type="primary">Rsrc2</name>
</gene>